<protein>
    <recommendedName>
        <fullName evidence="1">Ribonuclease PH</fullName>
        <shortName evidence="1">RNase PH</shortName>
        <ecNumber evidence="1">2.7.7.56</ecNumber>
    </recommendedName>
    <alternativeName>
        <fullName evidence="1">tRNA nucleotidyltransferase</fullName>
    </alternativeName>
</protein>
<reference key="1">
    <citation type="journal article" date="2009" name="J. Bacteriol.">
        <title>Complete genome sequence of Rhodobacter sphaeroides KD131.</title>
        <authorList>
            <person name="Lim S.-K."/>
            <person name="Kim S.J."/>
            <person name="Cha S.H."/>
            <person name="Oh Y.-K."/>
            <person name="Rhee H.-J."/>
            <person name="Kim M.-S."/>
            <person name="Lee J.K."/>
        </authorList>
    </citation>
    <scope>NUCLEOTIDE SEQUENCE [LARGE SCALE GENOMIC DNA]</scope>
    <source>
        <strain>KD131 / KCTC 12085</strain>
    </source>
</reference>
<name>RNPH_CERSK</name>
<feature type="chain" id="PRO_1000146786" description="Ribonuclease PH">
    <location>
        <begin position="1"/>
        <end position="237"/>
    </location>
</feature>
<feature type="binding site" evidence="1">
    <location>
        <position position="86"/>
    </location>
    <ligand>
        <name>phosphate</name>
        <dbReference type="ChEBI" id="CHEBI:43474"/>
        <note>substrate</note>
    </ligand>
</feature>
<feature type="binding site" evidence="1">
    <location>
        <begin position="124"/>
        <end position="126"/>
    </location>
    <ligand>
        <name>phosphate</name>
        <dbReference type="ChEBI" id="CHEBI:43474"/>
        <note>substrate</note>
    </ligand>
</feature>
<sequence length="237" mass="25155">MRPSGRKLDQMRSVSIEPNVMKHAEGSCLIRMGETHVLCSASIEDKPPPFLKNTGLGWVTAEYGMLPRATTSRNRREAAAGKQSGRTQEIQRLIGRALRAGVDRSALGERQIVIDCDVLQADGGTRCASITGGWVALRLAVNKLLKAGIIVSDPIVDNVAAVSCGIYAGQPVLDLDYAEDSTAGTDGNFVLTGRSRMIEVQMSAEGASFSRDEMGQLLDLAEAGIAELVAAQKAALG</sequence>
<accession>B9KPU4</accession>
<comment type="function">
    <text evidence="1">Phosphorolytic 3'-5' exoribonuclease that plays an important role in tRNA 3'-end maturation. Removes nucleotide residues following the 3'-CCA terminus of tRNAs; can also add nucleotides to the ends of RNA molecules by using nucleoside diphosphates as substrates, but this may not be physiologically important. Probably plays a role in initiation of 16S rRNA degradation (leading to ribosome degradation) during starvation.</text>
</comment>
<comment type="catalytic activity">
    <reaction evidence="1">
        <text>tRNA(n+1) + phosphate = tRNA(n) + a ribonucleoside 5'-diphosphate</text>
        <dbReference type="Rhea" id="RHEA:10628"/>
        <dbReference type="Rhea" id="RHEA-COMP:17343"/>
        <dbReference type="Rhea" id="RHEA-COMP:17344"/>
        <dbReference type="ChEBI" id="CHEBI:43474"/>
        <dbReference type="ChEBI" id="CHEBI:57930"/>
        <dbReference type="ChEBI" id="CHEBI:173114"/>
        <dbReference type="EC" id="2.7.7.56"/>
    </reaction>
</comment>
<comment type="subunit">
    <text evidence="1">Homohexameric ring arranged as a trimer of dimers.</text>
</comment>
<comment type="similarity">
    <text evidence="1">Belongs to the RNase PH family.</text>
</comment>
<keyword id="KW-0548">Nucleotidyltransferase</keyword>
<keyword id="KW-0694">RNA-binding</keyword>
<keyword id="KW-0698">rRNA processing</keyword>
<keyword id="KW-0808">Transferase</keyword>
<keyword id="KW-0819">tRNA processing</keyword>
<keyword id="KW-0820">tRNA-binding</keyword>
<proteinExistence type="inferred from homology"/>
<evidence type="ECO:0000255" key="1">
    <source>
        <dbReference type="HAMAP-Rule" id="MF_00564"/>
    </source>
</evidence>
<organism>
    <name type="scientific">Cereibacter sphaeroides (strain KD131 / KCTC 12085)</name>
    <name type="common">Rhodobacter sphaeroides</name>
    <dbReference type="NCBI Taxonomy" id="557760"/>
    <lineage>
        <taxon>Bacteria</taxon>
        <taxon>Pseudomonadati</taxon>
        <taxon>Pseudomonadota</taxon>
        <taxon>Alphaproteobacteria</taxon>
        <taxon>Rhodobacterales</taxon>
        <taxon>Paracoccaceae</taxon>
        <taxon>Cereibacter</taxon>
    </lineage>
</organism>
<gene>
    <name evidence="1" type="primary">rph</name>
    <name type="ordered locus">RSKD131_2619</name>
</gene>
<dbReference type="EC" id="2.7.7.56" evidence="1"/>
<dbReference type="EMBL" id="CP001150">
    <property type="protein sequence ID" value="ACM02479.1"/>
    <property type="molecule type" value="Genomic_DNA"/>
</dbReference>
<dbReference type="RefSeq" id="WP_015921545.1">
    <property type="nucleotide sequence ID" value="NC_011963.1"/>
</dbReference>
<dbReference type="SMR" id="B9KPU4"/>
<dbReference type="GeneID" id="67447993"/>
<dbReference type="KEGG" id="rsk:RSKD131_2619"/>
<dbReference type="HOGENOM" id="CLU_050858_0_0_5"/>
<dbReference type="GO" id="GO:0000175">
    <property type="term" value="F:3'-5'-RNA exonuclease activity"/>
    <property type="evidence" value="ECO:0007669"/>
    <property type="project" value="UniProtKB-UniRule"/>
</dbReference>
<dbReference type="GO" id="GO:0000049">
    <property type="term" value="F:tRNA binding"/>
    <property type="evidence" value="ECO:0007669"/>
    <property type="project" value="UniProtKB-UniRule"/>
</dbReference>
<dbReference type="GO" id="GO:0009022">
    <property type="term" value="F:tRNA nucleotidyltransferase activity"/>
    <property type="evidence" value="ECO:0007669"/>
    <property type="project" value="UniProtKB-UniRule"/>
</dbReference>
<dbReference type="GO" id="GO:0016075">
    <property type="term" value="P:rRNA catabolic process"/>
    <property type="evidence" value="ECO:0007669"/>
    <property type="project" value="UniProtKB-UniRule"/>
</dbReference>
<dbReference type="GO" id="GO:0006364">
    <property type="term" value="P:rRNA processing"/>
    <property type="evidence" value="ECO:0007669"/>
    <property type="project" value="UniProtKB-KW"/>
</dbReference>
<dbReference type="GO" id="GO:0008033">
    <property type="term" value="P:tRNA processing"/>
    <property type="evidence" value="ECO:0007669"/>
    <property type="project" value="UniProtKB-UniRule"/>
</dbReference>
<dbReference type="CDD" id="cd11362">
    <property type="entry name" value="RNase_PH_bact"/>
    <property type="match status" value="1"/>
</dbReference>
<dbReference type="FunFam" id="3.30.230.70:FF:000003">
    <property type="entry name" value="Ribonuclease PH"/>
    <property type="match status" value="1"/>
</dbReference>
<dbReference type="Gene3D" id="3.30.230.70">
    <property type="entry name" value="GHMP Kinase, N-terminal domain"/>
    <property type="match status" value="1"/>
</dbReference>
<dbReference type="HAMAP" id="MF_00564">
    <property type="entry name" value="RNase_PH"/>
    <property type="match status" value="1"/>
</dbReference>
<dbReference type="InterPro" id="IPR001247">
    <property type="entry name" value="ExoRNase_PH_dom1"/>
</dbReference>
<dbReference type="InterPro" id="IPR015847">
    <property type="entry name" value="ExoRNase_PH_dom2"/>
</dbReference>
<dbReference type="InterPro" id="IPR036345">
    <property type="entry name" value="ExoRNase_PH_dom2_sf"/>
</dbReference>
<dbReference type="InterPro" id="IPR027408">
    <property type="entry name" value="PNPase/RNase_PH_dom_sf"/>
</dbReference>
<dbReference type="InterPro" id="IPR020568">
    <property type="entry name" value="Ribosomal_Su5_D2-typ_SF"/>
</dbReference>
<dbReference type="InterPro" id="IPR050080">
    <property type="entry name" value="RNase_PH"/>
</dbReference>
<dbReference type="InterPro" id="IPR002381">
    <property type="entry name" value="RNase_PH_bac-type"/>
</dbReference>
<dbReference type="InterPro" id="IPR018336">
    <property type="entry name" value="RNase_PH_CS"/>
</dbReference>
<dbReference type="NCBIfam" id="TIGR01966">
    <property type="entry name" value="RNasePH"/>
    <property type="match status" value="1"/>
</dbReference>
<dbReference type="PANTHER" id="PTHR11953">
    <property type="entry name" value="EXOSOME COMPLEX COMPONENT"/>
    <property type="match status" value="1"/>
</dbReference>
<dbReference type="PANTHER" id="PTHR11953:SF0">
    <property type="entry name" value="EXOSOME COMPLEX COMPONENT RRP41"/>
    <property type="match status" value="1"/>
</dbReference>
<dbReference type="Pfam" id="PF01138">
    <property type="entry name" value="RNase_PH"/>
    <property type="match status" value="1"/>
</dbReference>
<dbReference type="Pfam" id="PF03725">
    <property type="entry name" value="RNase_PH_C"/>
    <property type="match status" value="1"/>
</dbReference>
<dbReference type="SUPFAM" id="SSF55666">
    <property type="entry name" value="Ribonuclease PH domain 2-like"/>
    <property type="match status" value="1"/>
</dbReference>
<dbReference type="SUPFAM" id="SSF54211">
    <property type="entry name" value="Ribosomal protein S5 domain 2-like"/>
    <property type="match status" value="1"/>
</dbReference>
<dbReference type="PROSITE" id="PS01277">
    <property type="entry name" value="RIBONUCLEASE_PH"/>
    <property type="match status" value="1"/>
</dbReference>